<name>FTSH4_SPHTD</name>
<reference key="1">
    <citation type="submission" date="2009-11" db="EMBL/GenBank/DDBJ databases">
        <title>The complete chromosome 2 of Sphaerobacter thermophilus DSM 20745.</title>
        <authorList>
            <person name="Lucas S."/>
            <person name="Copeland A."/>
            <person name="Lapidus A."/>
            <person name="Glavina del Rio T."/>
            <person name="Dalin E."/>
            <person name="Tice H."/>
            <person name="Bruce D."/>
            <person name="Goodwin L."/>
            <person name="Pitluck S."/>
            <person name="Kyrpides N."/>
            <person name="Mavromatis K."/>
            <person name="Ivanova N."/>
            <person name="Mikhailova N."/>
            <person name="LaButti K.M."/>
            <person name="Clum A."/>
            <person name="Sun H.I."/>
            <person name="Brettin T."/>
            <person name="Detter J.C."/>
            <person name="Han C."/>
            <person name="Larimer F."/>
            <person name="Land M."/>
            <person name="Hauser L."/>
            <person name="Markowitz V."/>
            <person name="Cheng J.F."/>
            <person name="Hugenholtz P."/>
            <person name="Woyke T."/>
            <person name="Wu D."/>
            <person name="Steenblock K."/>
            <person name="Schneider S."/>
            <person name="Pukall R."/>
            <person name="Goeker M."/>
            <person name="Klenk H.P."/>
            <person name="Eisen J.A."/>
        </authorList>
    </citation>
    <scope>NUCLEOTIDE SEQUENCE [LARGE SCALE GENOMIC DNA]</scope>
    <source>
        <strain>ATCC 49802 / DSM 20745 / KCCM 41009 / NCIMB 13125 / S 6022</strain>
    </source>
</reference>
<gene>
    <name type="primary">ftsh4</name>
    <name type="ordered locus">Sthe_2649</name>
</gene>
<proteinExistence type="inferred from homology"/>
<feature type="chain" id="PRO_0000400397" description="ATP-dependent zinc metalloprotease FtsH 4">
    <location>
        <begin position="1"/>
        <end position="658"/>
    </location>
</feature>
<feature type="topological domain" description="Cytoplasmic" evidence="1">
    <location>
        <begin position="1"/>
        <end position="28"/>
    </location>
</feature>
<feature type="transmembrane region" description="Helical" evidence="1">
    <location>
        <begin position="29"/>
        <end position="49"/>
    </location>
</feature>
<feature type="topological domain" description="Extracellular" evidence="1">
    <location>
        <begin position="50"/>
        <end position="149"/>
    </location>
</feature>
<feature type="transmembrane region" description="Helical" evidence="1">
    <location>
        <begin position="150"/>
        <end position="170"/>
    </location>
</feature>
<feature type="topological domain" description="Cytoplasmic" evidence="1">
    <location>
        <begin position="171"/>
        <end position="658"/>
    </location>
</feature>
<feature type="region of interest" description="Disordered" evidence="2">
    <location>
        <begin position="1"/>
        <end position="22"/>
    </location>
</feature>
<feature type="region of interest" description="Disordered" evidence="2">
    <location>
        <begin position="95"/>
        <end position="114"/>
    </location>
</feature>
<feature type="active site" evidence="1">
    <location>
        <position position="465"/>
    </location>
</feature>
<feature type="binding site" evidence="1">
    <location>
        <begin position="243"/>
        <end position="250"/>
    </location>
    <ligand>
        <name>ATP</name>
        <dbReference type="ChEBI" id="CHEBI:30616"/>
    </ligand>
</feature>
<feature type="binding site" evidence="1">
    <location>
        <position position="464"/>
    </location>
    <ligand>
        <name>Zn(2+)</name>
        <dbReference type="ChEBI" id="CHEBI:29105"/>
        <note>catalytic</note>
    </ligand>
</feature>
<feature type="binding site" evidence="1">
    <location>
        <position position="468"/>
    </location>
    <ligand>
        <name>Zn(2+)</name>
        <dbReference type="ChEBI" id="CHEBI:29105"/>
        <note>catalytic</note>
    </ligand>
</feature>
<feature type="binding site" evidence="1">
    <location>
        <position position="540"/>
    </location>
    <ligand>
        <name>Zn(2+)</name>
        <dbReference type="ChEBI" id="CHEBI:29105"/>
        <note>catalytic</note>
    </ligand>
</feature>
<keyword id="KW-0067">ATP-binding</keyword>
<keyword id="KW-1003">Cell membrane</keyword>
<keyword id="KW-0378">Hydrolase</keyword>
<keyword id="KW-0472">Membrane</keyword>
<keyword id="KW-0479">Metal-binding</keyword>
<keyword id="KW-0482">Metalloprotease</keyword>
<keyword id="KW-0547">Nucleotide-binding</keyword>
<keyword id="KW-0645">Protease</keyword>
<keyword id="KW-1185">Reference proteome</keyword>
<keyword id="KW-0812">Transmembrane</keyword>
<keyword id="KW-1133">Transmembrane helix</keyword>
<keyword id="KW-0862">Zinc</keyword>
<protein>
    <recommendedName>
        <fullName evidence="1">ATP-dependent zinc metalloprotease FtsH 4</fullName>
        <ecNumber evidence="1">3.4.24.-</ecNumber>
    </recommendedName>
</protein>
<accession>D1C8C0</accession>
<organism>
    <name type="scientific">Sphaerobacter thermophilus (strain ATCC 49802 / DSM 20745 / KCCM 41009 / NCIMB 13125 / S 6022)</name>
    <dbReference type="NCBI Taxonomy" id="479434"/>
    <lineage>
        <taxon>Bacteria</taxon>
        <taxon>Pseudomonadati</taxon>
        <taxon>Thermomicrobiota</taxon>
        <taxon>Thermomicrobia</taxon>
        <taxon>Sphaerobacterales</taxon>
        <taxon>Sphaerobacterineae</taxon>
        <taxon>Sphaerobacteraceae</taxon>
        <taxon>Sphaerobacter</taxon>
    </lineage>
</organism>
<evidence type="ECO:0000255" key="1">
    <source>
        <dbReference type="HAMAP-Rule" id="MF_01458"/>
    </source>
</evidence>
<evidence type="ECO:0000256" key="2">
    <source>
        <dbReference type="SAM" id="MobiDB-lite"/>
    </source>
</evidence>
<comment type="function">
    <text evidence="1">Acts as a processive, ATP-dependent zinc metallopeptidase for both cytoplasmic and membrane proteins. Plays a role in the quality control of integral membrane proteins.</text>
</comment>
<comment type="cofactor">
    <cofactor evidence="1">
        <name>Zn(2+)</name>
        <dbReference type="ChEBI" id="CHEBI:29105"/>
    </cofactor>
    <text evidence="1">Binds 1 zinc ion per subunit.</text>
</comment>
<comment type="subunit">
    <text evidence="1">Homohexamer.</text>
</comment>
<comment type="subcellular location">
    <subcellularLocation>
        <location evidence="1">Cell membrane</location>
        <topology evidence="1">Multi-pass membrane protein</topology>
        <orientation evidence="1">Cytoplasmic side</orientation>
    </subcellularLocation>
</comment>
<comment type="similarity">
    <text evidence="1">In the central section; belongs to the AAA ATPase family.</text>
</comment>
<comment type="similarity">
    <text evidence="1">In the C-terminal section; belongs to the peptidase M41 family.</text>
</comment>
<dbReference type="EC" id="3.4.24.-" evidence="1"/>
<dbReference type="EMBL" id="CP001824">
    <property type="protein sequence ID" value="ACZ40063.1"/>
    <property type="molecule type" value="Genomic_DNA"/>
</dbReference>
<dbReference type="SMR" id="D1C8C0"/>
<dbReference type="STRING" id="479434.Sthe_2649"/>
<dbReference type="KEGG" id="sti:Sthe_2649"/>
<dbReference type="eggNOG" id="COG0465">
    <property type="taxonomic scope" value="Bacteria"/>
</dbReference>
<dbReference type="HOGENOM" id="CLU_000688_16_2_0"/>
<dbReference type="InParanoid" id="D1C8C0"/>
<dbReference type="OrthoDB" id="9809379at2"/>
<dbReference type="Proteomes" id="UP000002027">
    <property type="component" value="Chromosome 2"/>
</dbReference>
<dbReference type="GO" id="GO:0005886">
    <property type="term" value="C:plasma membrane"/>
    <property type="evidence" value="ECO:0007669"/>
    <property type="project" value="UniProtKB-SubCell"/>
</dbReference>
<dbReference type="GO" id="GO:0005524">
    <property type="term" value="F:ATP binding"/>
    <property type="evidence" value="ECO:0007669"/>
    <property type="project" value="UniProtKB-UniRule"/>
</dbReference>
<dbReference type="GO" id="GO:0016887">
    <property type="term" value="F:ATP hydrolysis activity"/>
    <property type="evidence" value="ECO:0007669"/>
    <property type="project" value="UniProtKB-UniRule"/>
</dbReference>
<dbReference type="GO" id="GO:0004176">
    <property type="term" value="F:ATP-dependent peptidase activity"/>
    <property type="evidence" value="ECO:0007669"/>
    <property type="project" value="InterPro"/>
</dbReference>
<dbReference type="GO" id="GO:0004222">
    <property type="term" value="F:metalloendopeptidase activity"/>
    <property type="evidence" value="ECO:0007669"/>
    <property type="project" value="InterPro"/>
</dbReference>
<dbReference type="GO" id="GO:0008270">
    <property type="term" value="F:zinc ion binding"/>
    <property type="evidence" value="ECO:0007669"/>
    <property type="project" value="UniProtKB-UniRule"/>
</dbReference>
<dbReference type="GO" id="GO:0030163">
    <property type="term" value="P:protein catabolic process"/>
    <property type="evidence" value="ECO:0007669"/>
    <property type="project" value="UniProtKB-UniRule"/>
</dbReference>
<dbReference type="GO" id="GO:0006508">
    <property type="term" value="P:proteolysis"/>
    <property type="evidence" value="ECO:0007669"/>
    <property type="project" value="UniProtKB-KW"/>
</dbReference>
<dbReference type="CDD" id="cd19501">
    <property type="entry name" value="RecA-like_FtsH"/>
    <property type="match status" value="1"/>
</dbReference>
<dbReference type="FunFam" id="1.10.8.60:FF:000001">
    <property type="entry name" value="ATP-dependent zinc metalloprotease FtsH"/>
    <property type="match status" value="1"/>
</dbReference>
<dbReference type="FunFam" id="1.20.58.760:FF:000001">
    <property type="entry name" value="ATP-dependent zinc metalloprotease FtsH"/>
    <property type="match status" value="1"/>
</dbReference>
<dbReference type="FunFam" id="3.40.50.300:FF:000001">
    <property type="entry name" value="ATP-dependent zinc metalloprotease FtsH"/>
    <property type="match status" value="1"/>
</dbReference>
<dbReference type="Gene3D" id="1.10.8.60">
    <property type="match status" value="1"/>
</dbReference>
<dbReference type="Gene3D" id="3.30.720.210">
    <property type="match status" value="1"/>
</dbReference>
<dbReference type="Gene3D" id="3.40.50.300">
    <property type="entry name" value="P-loop containing nucleotide triphosphate hydrolases"/>
    <property type="match status" value="1"/>
</dbReference>
<dbReference type="Gene3D" id="1.20.58.760">
    <property type="entry name" value="Peptidase M41"/>
    <property type="match status" value="1"/>
</dbReference>
<dbReference type="HAMAP" id="MF_01458">
    <property type="entry name" value="FtsH"/>
    <property type="match status" value="1"/>
</dbReference>
<dbReference type="InterPro" id="IPR003593">
    <property type="entry name" value="AAA+_ATPase"/>
</dbReference>
<dbReference type="InterPro" id="IPR041569">
    <property type="entry name" value="AAA_lid_3"/>
</dbReference>
<dbReference type="InterPro" id="IPR003959">
    <property type="entry name" value="ATPase_AAA_core"/>
</dbReference>
<dbReference type="InterPro" id="IPR003960">
    <property type="entry name" value="ATPase_AAA_CS"/>
</dbReference>
<dbReference type="InterPro" id="IPR005936">
    <property type="entry name" value="FtsH"/>
</dbReference>
<dbReference type="InterPro" id="IPR027417">
    <property type="entry name" value="P-loop_NTPase"/>
</dbReference>
<dbReference type="InterPro" id="IPR011546">
    <property type="entry name" value="Pept_M41_FtsH_extracell"/>
</dbReference>
<dbReference type="InterPro" id="IPR000642">
    <property type="entry name" value="Peptidase_M41"/>
</dbReference>
<dbReference type="InterPro" id="IPR037219">
    <property type="entry name" value="Peptidase_M41-like"/>
</dbReference>
<dbReference type="NCBIfam" id="TIGR01241">
    <property type="entry name" value="FtsH_fam"/>
    <property type="match status" value="1"/>
</dbReference>
<dbReference type="PANTHER" id="PTHR23076:SF97">
    <property type="entry name" value="ATP-DEPENDENT ZINC METALLOPROTEASE YME1L1"/>
    <property type="match status" value="1"/>
</dbReference>
<dbReference type="PANTHER" id="PTHR23076">
    <property type="entry name" value="METALLOPROTEASE M41 FTSH"/>
    <property type="match status" value="1"/>
</dbReference>
<dbReference type="Pfam" id="PF00004">
    <property type="entry name" value="AAA"/>
    <property type="match status" value="1"/>
</dbReference>
<dbReference type="Pfam" id="PF17862">
    <property type="entry name" value="AAA_lid_3"/>
    <property type="match status" value="1"/>
</dbReference>
<dbReference type="Pfam" id="PF06480">
    <property type="entry name" value="FtsH_ext"/>
    <property type="match status" value="1"/>
</dbReference>
<dbReference type="Pfam" id="PF01434">
    <property type="entry name" value="Peptidase_M41"/>
    <property type="match status" value="1"/>
</dbReference>
<dbReference type="SMART" id="SM00382">
    <property type="entry name" value="AAA"/>
    <property type="match status" value="1"/>
</dbReference>
<dbReference type="SUPFAM" id="SSF140990">
    <property type="entry name" value="FtsH protease domain-like"/>
    <property type="match status" value="1"/>
</dbReference>
<dbReference type="SUPFAM" id="SSF52540">
    <property type="entry name" value="P-loop containing nucleoside triphosphate hydrolases"/>
    <property type="match status" value="1"/>
</dbReference>
<dbReference type="PROSITE" id="PS00674">
    <property type="entry name" value="AAA"/>
    <property type="match status" value="1"/>
</dbReference>
<sequence>MREPTNRQGSPGPGEPRPPAQGRPRFPTWILWVALLALALWNVYTFFWPSSGARLNIPYSAFIQQVEGENVSSVTIRGQRVSGTFTEEVRVAGDQVLSPGDPVPPGTSPNEIRTGTQFQTTIPENSQTELVPLLQSHGVTVKIDQAGGSVWPSLLATIVPLFLFIGLMVYLGRSMSRGQQNVFSFGRSKARVYDAERPRVTFADVAGEEEAKAELSEVVDFLRNPMKYHAIGARLPRGILLVGPPGTGKTLLARAVAGEAGVPFFSVSASEFVEMFVGVGASRVRDLFERAKASAPSIMFVDELDAVGRQRFAGLGGGNDEREQTLNQLLVEMDGFEPHQDVIVIAATNRPDVLDPALLRPGRFDRQVTVGLPDRRGREAILRIHTRGIPVADDLDLEELAAATPGFSGADLANLVNEAALMAARKNKKIVERIDFDEALDKIVLGTERAMIMSEHDKRVVAYHEAGHAVAAHFSPGTDPLRKVSIVPRGQSLGVTIQAPEEDRFNYSRAYLLARLTVMMGGRAAEKLVFNEMTTGAQNDLKEATLLARRMVGLWGMSDEVGPVYLGMGEQHVFLGREIMQDRDVAEATLERADEAVQRLLREAMERAEQLLRKYRDKLDALAEALIAEETIGQEKITEILGAPPVPSAAPAAAADSV</sequence>